<comment type="function">
    <text evidence="1">Catalyzes the condensation of ATP and 5-phosphoribose 1-diphosphate to form N'-(5'-phosphoribosyl)-ATP (PR-ATP). Has a crucial role in the pathway because the rate of histidine biosynthesis seems to be controlled primarily by regulation of HisG enzymatic activity.</text>
</comment>
<comment type="catalytic activity">
    <reaction evidence="1">
        <text>1-(5-phospho-beta-D-ribosyl)-ATP + diphosphate = 5-phospho-alpha-D-ribose 1-diphosphate + ATP</text>
        <dbReference type="Rhea" id="RHEA:18473"/>
        <dbReference type="ChEBI" id="CHEBI:30616"/>
        <dbReference type="ChEBI" id="CHEBI:33019"/>
        <dbReference type="ChEBI" id="CHEBI:58017"/>
        <dbReference type="ChEBI" id="CHEBI:73183"/>
        <dbReference type="EC" id="2.4.2.17"/>
    </reaction>
</comment>
<comment type="cofactor">
    <cofactor evidence="1">
        <name>Mg(2+)</name>
        <dbReference type="ChEBI" id="CHEBI:18420"/>
    </cofactor>
</comment>
<comment type="activity regulation">
    <text evidence="1">Feedback inhibited by histidine.</text>
</comment>
<comment type="pathway">
    <text evidence="1">Amino-acid biosynthesis; L-histidine biosynthesis; L-histidine from 5-phospho-alpha-D-ribose 1-diphosphate: step 1/9.</text>
</comment>
<comment type="subcellular location">
    <subcellularLocation>
        <location evidence="1">Cytoplasm</location>
    </subcellularLocation>
</comment>
<comment type="similarity">
    <text evidence="1">Belongs to the ATP phosphoribosyltransferase family. Long subfamily.</text>
</comment>
<name>HIS1_RHOOB</name>
<evidence type="ECO:0000255" key="1">
    <source>
        <dbReference type="HAMAP-Rule" id="MF_00079"/>
    </source>
</evidence>
<keyword id="KW-0028">Amino-acid biosynthesis</keyword>
<keyword id="KW-0067">ATP-binding</keyword>
<keyword id="KW-0963">Cytoplasm</keyword>
<keyword id="KW-0328">Glycosyltransferase</keyword>
<keyword id="KW-0368">Histidine biosynthesis</keyword>
<keyword id="KW-0460">Magnesium</keyword>
<keyword id="KW-0479">Metal-binding</keyword>
<keyword id="KW-0547">Nucleotide-binding</keyword>
<keyword id="KW-0808">Transferase</keyword>
<protein>
    <recommendedName>
        <fullName evidence="1">ATP phosphoribosyltransferase</fullName>
        <shortName evidence="1">ATP-PRT</shortName>
        <shortName evidence="1">ATP-PRTase</shortName>
        <ecNumber evidence="1">2.4.2.17</ecNumber>
    </recommendedName>
</protein>
<gene>
    <name evidence="1" type="primary">hisG</name>
    <name type="ordered locus">ROP_05920</name>
</gene>
<accession>C1ASQ7</accession>
<dbReference type="EC" id="2.4.2.17" evidence="1"/>
<dbReference type="EMBL" id="AP011115">
    <property type="protein sequence ID" value="BAH48839.1"/>
    <property type="molecule type" value="Genomic_DNA"/>
</dbReference>
<dbReference type="RefSeq" id="WP_012687844.1">
    <property type="nucleotide sequence ID" value="NC_012522.1"/>
</dbReference>
<dbReference type="SMR" id="C1ASQ7"/>
<dbReference type="STRING" id="632772.ROP_05920"/>
<dbReference type="KEGG" id="rop:ROP_05920"/>
<dbReference type="PATRIC" id="fig|632772.20.peg.650"/>
<dbReference type="HOGENOM" id="CLU_038115_1_1_11"/>
<dbReference type="OrthoDB" id="9801867at2"/>
<dbReference type="UniPathway" id="UPA00031">
    <property type="reaction ID" value="UER00006"/>
</dbReference>
<dbReference type="Proteomes" id="UP000002212">
    <property type="component" value="Chromosome"/>
</dbReference>
<dbReference type="GO" id="GO:0005737">
    <property type="term" value="C:cytoplasm"/>
    <property type="evidence" value="ECO:0007669"/>
    <property type="project" value="UniProtKB-SubCell"/>
</dbReference>
<dbReference type="GO" id="GO:0005524">
    <property type="term" value="F:ATP binding"/>
    <property type="evidence" value="ECO:0007669"/>
    <property type="project" value="UniProtKB-KW"/>
</dbReference>
<dbReference type="GO" id="GO:0003879">
    <property type="term" value="F:ATP phosphoribosyltransferase activity"/>
    <property type="evidence" value="ECO:0007669"/>
    <property type="project" value="UniProtKB-UniRule"/>
</dbReference>
<dbReference type="GO" id="GO:0000287">
    <property type="term" value="F:magnesium ion binding"/>
    <property type="evidence" value="ECO:0007669"/>
    <property type="project" value="UniProtKB-UniRule"/>
</dbReference>
<dbReference type="GO" id="GO:0000105">
    <property type="term" value="P:L-histidine biosynthetic process"/>
    <property type="evidence" value="ECO:0007669"/>
    <property type="project" value="UniProtKB-UniRule"/>
</dbReference>
<dbReference type="CDD" id="cd13591">
    <property type="entry name" value="PBP2_HisGL1"/>
    <property type="match status" value="1"/>
</dbReference>
<dbReference type="FunFam" id="3.30.70.120:FF:000003">
    <property type="entry name" value="ATP phosphoribosyltransferase"/>
    <property type="match status" value="1"/>
</dbReference>
<dbReference type="FunFam" id="3.40.190.10:FF:000136">
    <property type="entry name" value="ATP phosphoribosyltransferase"/>
    <property type="match status" value="1"/>
</dbReference>
<dbReference type="Gene3D" id="3.30.70.120">
    <property type="match status" value="1"/>
</dbReference>
<dbReference type="Gene3D" id="3.40.190.10">
    <property type="entry name" value="Periplasmic binding protein-like II"/>
    <property type="match status" value="2"/>
</dbReference>
<dbReference type="HAMAP" id="MF_00079">
    <property type="entry name" value="HisG_Long"/>
    <property type="match status" value="1"/>
</dbReference>
<dbReference type="InterPro" id="IPR020621">
    <property type="entry name" value="ATP-PRT_HisG_long"/>
</dbReference>
<dbReference type="InterPro" id="IPR013820">
    <property type="entry name" value="ATP_PRibTrfase_cat"/>
</dbReference>
<dbReference type="InterPro" id="IPR018198">
    <property type="entry name" value="ATP_PRibTrfase_CS"/>
</dbReference>
<dbReference type="InterPro" id="IPR001348">
    <property type="entry name" value="ATP_PRibTrfase_HisG"/>
</dbReference>
<dbReference type="InterPro" id="IPR013115">
    <property type="entry name" value="HisG_C"/>
</dbReference>
<dbReference type="InterPro" id="IPR011322">
    <property type="entry name" value="N-reg_PII-like_a/b"/>
</dbReference>
<dbReference type="InterPro" id="IPR015867">
    <property type="entry name" value="N-reg_PII/ATP_PRibTrfase_C"/>
</dbReference>
<dbReference type="NCBIfam" id="TIGR00070">
    <property type="entry name" value="hisG"/>
    <property type="match status" value="1"/>
</dbReference>
<dbReference type="NCBIfam" id="TIGR03455">
    <property type="entry name" value="HisG_C-term"/>
    <property type="match status" value="1"/>
</dbReference>
<dbReference type="PANTHER" id="PTHR21403:SF8">
    <property type="entry name" value="ATP PHOSPHORIBOSYLTRANSFERASE"/>
    <property type="match status" value="1"/>
</dbReference>
<dbReference type="PANTHER" id="PTHR21403">
    <property type="entry name" value="ATP PHOSPHORIBOSYLTRANSFERASE ATP-PRTASE"/>
    <property type="match status" value="1"/>
</dbReference>
<dbReference type="Pfam" id="PF01634">
    <property type="entry name" value="HisG"/>
    <property type="match status" value="1"/>
</dbReference>
<dbReference type="Pfam" id="PF08029">
    <property type="entry name" value="HisG_C"/>
    <property type="match status" value="1"/>
</dbReference>
<dbReference type="SUPFAM" id="SSF54913">
    <property type="entry name" value="GlnB-like"/>
    <property type="match status" value="1"/>
</dbReference>
<dbReference type="SUPFAM" id="SSF53850">
    <property type="entry name" value="Periplasmic binding protein-like II"/>
    <property type="match status" value="1"/>
</dbReference>
<dbReference type="PROSITE" id="PS01316">
    <property type="entry name" value="ATP_P_PHORIBOSYLTR"/>
    <property type="match status" value="1"/>
</dbReference>
<proteinExistence type="inferred from homology"/>
<feature type="chain" id="PRO_1000118256" description="ATP phosphoribosyltransferase">
    <location>
        <begin position="1"/>
        <end position="283"/>
    </location>
</feature>
<organism>
    <name type="scientific">Rhodococcus opacus (strain B4)</name>
    <dbReference type="NCBI Taxonomy" id="632772"/>
    <lineage>
        <taxon>Bacteria</taxon>
        <taxon>Bacillati</taxon>
        <taxon>Actinomycetota</taxon>
        <taxon>Actinomycetes</taxon>
        <taxon>Mycobacteriales</taxon>
        <taxon>Nocardiaceae</taxon>
        <taxon>Rhodococcus</taxon>
    </lineage>
</organism>
<sequence length="283" mass="30374">MLRVAVPNKGSLSESAAEILSEAGYRRRTDSRDLTVLDPSNQVEFFFLRPKDIAIYVGSGELDLGITGRDLARDSGAPVAERLSLGFGRSTFRYAAPAGKDWKVEDLAGLRIATSYPNLVRDDLSARGIEASVIRLDGAVEISIQLGVADAIADVVGSGRTLRQHNLVAFGDTLCDSEGVLIERAGSPADDSARNQLVERVRGIVFAQQNLMLDYDCPKTILDDALKITPGLESPTLSPLADENWVAVRAMVPIKGHNGVMDELADLGAKAILASNIRSCRAL</sequence>
<reference key="1">
    <citation type="submission" date="2009-03" db="EMBL/GenBank/DDBJ databases">
        <title>Comparison of the complete genome sequences of Rhodococcus erythropolis PR4 and Rhodococcus opacus B4.</title>
        <authorList>
            <person name="Takarada H."/>
            <person name="Sekine M."/>
            <person name="Hosoyama A."/>
            <person name="Yamada R."/>
            <person name="Fujisawa T."/>
            <person name="Omata S."/>
            <person name="Shimizu A."/>
            <person name="Tsukatani N."/>
            <person name="Tanikawa S."/>
            <person name="Fujita N."/>
            <person name="Harayama S."/>
        </authorList>
    </citation>
    <scope>NUCLEOTIDE SEQUENCE [LARGE SCALE GENOMIC DNA]</scope>
    <source>
        <strain>B4</strain>
    </source>
</reference>